<name>PUR9_BURCM</name>
<comment type="catalytic activity">
    <reaction evidence="1">
        <text>(6R)-10-formyltetrahydrofolate + 5-amino-1-(5-phospho-beta-D-ribosyl)imidazole-4-carboxamide = 5-formamido-1-(5-phospho-D-ribosyl)imidazole-4-carboxamide + (6S)-5,6,7,8-tetrahydrofolate</text>
        <dbReference type="Rhea" id="RHEA:22192"/>
        <dbReference type="ChEBI" id="CHEBI:57453"/>
        <dbReference type="ChEBI" id="CHEBI:58467"/>
        <dbReference type="ChEBI" id="CHEBI:58475"/>
        <dbReference type="ChEBI" id="CHEBI:195366"/>
        <dbReference type="EC" id="2.1.2.3"/>
    </reaction>
</comment>
<comment type="catalytic activity">
    <reaction evidence="1">
        <text>IMP + H2O = 5-formamido-1-(5-phospho-D-ribosyl)imidazole-4-carboxamide</text>
        <dbReference type="Rhea" id="RHEA:18445"/>
        <dbReference type="ChEBI" id="CHEBI:15377"/>
        <dbReference type="ChEBI" id="CHEBI:58053"/>
        <dbReference type="ChEBI" id="CHEBI:58467"/>
        <dbReference type="EC" id="3.5.4.10"/>
    </reaction>
</comment>
<comment type="pathway">
    <text evidence="1">Purine metabolism; IMP biosynthesis via de novo pathway; 5-formamido-1-(5-phospho-D-ribosyl)imidazole-4-carboxamide from 5-amino-1-(5-phospho-D-ribosyl)imidazole-4-carboxamide (10-formyl THF route): step 1/1.</text>
</comment>
<comment type="pathway">
    <text evidence="1">Purine metabolism; IMP biosynthesis via de novo pathway; IMP from 5-formamido-1-(5-phospho-D-ribosyl)imidazole-4-carboxamide: step 1/1.</text>
</comment>
<comment type="domain">
    <text evidence="1">The IMP cyclohydrolase activity resides in the N-terminal region.</text>
</comment>
<comment type="similarity">
    <text evidence="1">Belongs to the PurH family.</text>
</comment>
<accession>Q0BI80</accession>
<protein>
    <recommendedName>
        <fullName evidence="1">Bifunctional purine biosynthesis protein PurH</fullName>
    </recommendedName>
    <domain>
        <recommendedName>
            <fullName evidence="1">Phosphoribosylaminoimidazolecarboxamide formyltransferase</fullName>
            <ecNumber evidence="1">2.1.2.3</ecNumber>
        </recommendedName>
        <alternativeName>
            <fullName evidence="1">AICAR transformylase</fullName>
        </alternativeName>
    </domain>
    <domain>
        <recommendedName>
            <fullName evidence="1">IMP cyclohydrolase</fullName>
            <ecNumber evidence="1">3.5.4.10</ecNumber>
        </recommendedName>
        <alternativeName>
            <fullName evidence="1">ATIC</fullName>
        </alternativeName>
        <alternativeName>
            <fullName evidence="1">IMP synthase</fullName>
        </alternativeName>
        <alternativeName>
            <fullName evidence="1">Inosinicase</fullName>
        </alternativeName>
    </domain>
</protein>
<keyword id="KW-0378">Hydrolase</keyword>
<keyword id="KW-0511">Multifunctional enzyme</keyword>
<keyword id="KW-0658">Purine biosynthesis</keyword>
<keyword id="KW-0808">Transferase</keyword>
<feature type="chain" id="PRO_1000018853" description="Bifunctional purine biosynthesis protein PurH">
    <location>
        <begin position="1"/>
        <end position="521"/>
    </location>
</feature>
<feature type="domain" description="MGS-like" evidence="2">
    <location>
        <begin position="1"/>
        <end position="145"/>
    </location>
</feature>
<gene>
    <name evidence="1" type="primary">purH</name>
    <name type="ordered locus">Bamb_0584</name>
</gene>
<reference key="1">
    <citation type="submission" date="2006-08" db="EMBL/GenBank/DDBJ databases">
        <title>Complete sequence of chromosome 1 of Burkholderia cepacia AMMD.</title>
        <authorList>
            <person name="Copeland A."/>
            <person name="Lucas S."/>
            <person name="Lapidus A."/>
            <person name="Barry K."/>
            <person name="Detter J.C."/>
            <person name="Glavina del Rio T."/>
            <person name="Hammon N."/>
            <person name="Israni S."/>
            <person name="Pitluck S."/>
            <person name="Bruce D."/>
            <person name="Chain P."/>
            <person name="Malfatti S."/>
            <person name="Shin M."/>
            <person name="Vergez L."/>
            <person name="Schmutz J."/>
            <person name="Larimer F."/>
            <person name="Land M."/>
            <person name="Hauser L."/>
            <person name="Kyrpides N."/>
            <person name="Kim E."/>
            <person name="Parke J."/>
            <person name="Coenye T."/>
            <person name="Konstantinidis K."/>
            <person name="Ramette A."/>
            <person name="Tiedje J."/>
            <person name="Richardson P."/>
        </authorList>
    </citation>
    <scope>NUCLEOTIDE SEQUENCE [LARGE SCALE GENOMIC DNA]</scope>
    <source>
        <strain>ATCC BAA-244 / DSM 16087 / CCUG 44356 / LMG 19182 / AMMD</strain>
    </source>
</reference>
<proteinExistence type="inferred from homology"/>
<dbReference type="EC" id="2.1.2.3" evidence="1"/>
<dbReference type="EC" id="3.5.4.10" evidence="1"/>
<dbReference type="EMBL" id="CP000440">
    <property type="protein sequence ID" value="ABI86143.1"/>
    <property type="molecule type" value="Genomic_DNA"/>
</dbReference>
<dbReference type="RefSeq" id="WP_011655985.1">
    <property type="nucleotide sequence ID" value="NZ_CP009798.1"/>
</dbReference>
<dbReference type="SMR" id="Q0BI80"/>
<dbReference type="GeneID" id="93084000"/>
<dbReference type="KEGG" id="bam:Bamb_0584"/>
<dbReference type="PATRIC" id="fig|339670.21.peg.1013"/>
<dbReference type="eggNOG" id="COG0138">
    <property type="taxonomic scope" value="Bacteria"/>
</dbReference>
<dbReference type="UniPathway" id="UPA00074">
    <property type="reaction ID" value="UER00133"/>
</dbReference>
<dbReference type="UniPathway" id="UPA00074">
    <property type="reaction ID" value="UER00135"/>
</dbReference>
<dbReference type="Proteomes" id="UP000000662">
    <property type="component" value="Chromosome 1"/>
</dbReference>
<dbReference type="GO" id="GO:0005829">
    <property type="term" value="C:cytosol"/>
    <property type="evidence" value="ECO:0007669"/>
    <property type="project" value="TreeGrafter"/>
</dbReference>
<dbReference type="GO" id="GO:0003937">
    <property type="term" value="F:IMP cyclohydrolase activity"/>
    <property type="evidence" value="ECO:0007669"/>
    <property type="project" value="UniProtKB-UniRule"/>
</dbReference>
<dbReference type="GO" id="GO:0004643">
    <property type="term" value="F:phosphoribosylaminoimidazolecarboxamide formyltransferase activity"/>
    <property type="evidence" value="ECO:0007669"/>
    <property type="project" value="UniProtKB-UniRule"/>
</dbReference>
<dbReference type="GO" id="GO:0006189">
    <property type="term" value="P:'de novo' IMP biosynthetic process"/>
    <property type="evidence" value="ECO:0007669"/>
    <property type="project" value="UniProtKB-UniRule"/>
</dbReference>
<dbReference type="CDD" id="cd01421">
    <property type="entry name" value="IMPCH"/>
    <property type="match status" value="1"/>
</dbReference>
<dbReference type="FunFam" id="3.40.140.20:FF:000001">
    <property type="entry name" value="Bifunctional purine biosynthesis protein PurH"/>
    <property type="match status" value="1"/>
</dbReference>
<dbReference type="FunFam" id="3.40.140.20:FF:000002">
    <property type="entry name" value="Bifunctional purine biosynthesis protein PurH"/>
    <property type="match status" value="1"/>
</dbReference>
<dbReference type="FunFam" id="3.40.50.1380:FF:000001">
    <property type="entry name" value="Bifunctional purine biosynthesis protein PurH"/>
    <property type="match status" value="1"/>
</dbReference>
<dbReference type="Gene3D" id="3.40.140.20">
    <property type="match status" value="2"/>
</dbReference>
<dbReference type="Gene3D" id="3.40.50.1380">
    <property type="entry name" value="Methylglyoxal synthase-like domain"/>
    <property type="match status" value="1"/>
</dbReference>
<dbReference type="HAMAP" id="MF_00139">
    <property type="entry name" value="PurH"/>
    <property type="match status" value="1"/>
</dbReference>
<dbReference type="InterPro" id="IPR024051">
    <property type="entry name" value="AICAR_Tfase_dup_dom_sf"/>
</dbReference>
<dbReference type="InterPro" id="IPR016193">
    <property type="entry name" value="Cytidine_deaminase-like"/>
</dbReference>
<dbReference type="InterPro" id="IPR011607">
    <property type="entry name" value="MGS-like_dom"/>
</dbReference>
<dbReference type="InterPro" id="IPR036914">
    <property type="entry name" value="MGS-like_dom_sf"/>
</dbReference>
<dbReference type="InterPro" id="IPR002695">
    <property type="entry name" value="PurH-like"/>
</dbReference>
<dbReference type="NCBIfam" id="NF002049">
    <property type="entry name" value="PRK00881.1"/>
    <property type="match status" value="1"/>
</dbReference>
<dbReference type="NCBIfam" id="TIGR00355">
    <property type="entry name" value="purH"/>
    <property type="match status" value="1"/>
</dbReference>
<dbReference type="PANTHER" id="PTHR11692:SF0">
    <property type="entry name" value="BIFUNCTIONAL PURINE BIOSYNTHESIS PROTEIN ATIC"/>
    <property type="match status" value="1"/>
</dbReference>
<dbReference type="PANTHER" id="PTHR11692">
    <property type="entry name" value="BIFUNCTIONAL PURINE BIOSYNTHESIS PROTEIN PURH"/>
    <property type="match status" value="1"/>
</dbReference>
<dbReference type="Pfam" id="PF01808">
    <property type="entry name" value="AICARFT_IMPCHas"/>
    <property type="match status" value="1"/>
</dbReference>
<dbReference type="Pfam" id="PF02142">
    <property type="entry name" value="MGS"/>
    <property type="match status" value="1"/>
</dbReference>
<dbReference type="PIRSF" id="PIRSF000414">
    <property type="entry name" value="AICARFT_IMPCHas"/>
    <property type="match status" value="1"/>
</dbReference>
<dbReference type="SMART" id="SM00798">
    <property type="entry name" value="AICARFT_IMPCHas"/>
    <property type="match status" value="1"/>
</dbReference>
<dbReference type="SMART" id="SM00851">
    <property type="entry name" value="MGS"/>
    <property type="match status" value="1"/>
</dbReference>
<dbReference type="SUPFAM" id="SSF53927">
    <property type="entry name" value="Cytidine deaminase-like"/>
    <property type="match status" value="1"/>
</dbReference>
<dbReference type="SUPFAM" id="SSF52335">
    <property type="entry name" value="Methylglyoxal synthase-like"/>
    <property type="match status" value="1"/>
</dbReference>
<dbReference type="PROSITE" id="PS51855">
    <property type="entry name" value="MGS"/>
    <property type="match status" value="1"/>
</dbReference>
<evidence type="ECO:0000255" key="1">
    <source>
        <dbReference type="HAMAP-Rule" id="MF_00139"/>
    </source>
</evidence>
<evidence type="ECO:0000255" key="2">
    <source>
        <dbReference type="PROSITE-ProRule" id="PRU01202"/>
    </source>
</evidence>
<sequence length="521" mass="55521">MIKQALISVSDKTGIVDFAKSLSDLGVKLLSTGGTAKLLADAGLPVTEVADYTGFPEMLDGRVKTLHPKVHGGILARRDLPEHMQALEQHDIPTIDLLVVNLYPFVATIAKDDCTLADAIENIDIGGPTMLRSAAKNHRDVTVVVDPADYAVVLDEMKANGNAIGYATNFRLATKVFAHTAQYDGAITNYLTSLTDELQHASRSAYPATLNMAFDKVQDLRYGENPHQSAAFYRDLAAPAGALANYRQLQGKELSYNNIADSDAAWECVKTFDVPACVIIKHANPCGVAVGNDSADAYAKAFQTDPTSAFGGIIAFNREVDEAAAQAVAKQFVEVLIAPSFSDAAKQVFAAKQNVRLLEIALGDGHNAFDLKRVGGGLLVQSLDSKNVQPSELRVVTKRQPSAKEMDDLLFAWRVAKYVKSNAIVFCGNGMTLGVGAGQMSRVDSARIASIKAQNAGLTLAGSAVASDAFFPFRDGLDVVVAAGATCVIQPGGSMRDDEVIAAADEHGIAMILTGVRHFRH</sequence>
<organism>
    <name type="scientific">Burkholderia ambifaria (strain ATCC BAA-244 / DSM 16087 / CCUG 44356 / LMG 19182 / AMMD)</name>
    <name type="common">Burkholderia cepacia (strain AMMD)</name>
    <dbReference type="NCBI Taxonomy" id="339670"/>
    <lineage>
        <taxon>Bacteria</taxon>
        <taxon>Pseudomonadati</taxon>
        <taxon>Pseudomonadota</taxon>
        <taxon>Betaproteobacteria</taxon>
        <taxon>Burkholderiales</taxon>
        <taxon>Burkholderiaceae</taxon>
        <taxon>Burkholderia</taxon>
        <taxon>Burkholderia cepacia complex</taxon>
    </lineage>
</organism>